<proteinExistence type="evidence at transcript level"/>
<gene>
    <name evidence="6" type="primary">eng</name>
</gene>
<keyword id="KW-0037">Angiogenesis</keyword>
<keyword id="KW-1003">Cell membrane</keyword>
<keyword id="KW-1015">Disulfide bond</keyword>
<keyword id="KW-0325">Glycoprotein</keyword>
<keyword id="KW-0472">Membrane</keyword>
<keyword id="KW-1185">Reference proteome</keyword>
<keyword id="KW-0732">Signal</keyword>
<keyword id="KW-0812">Transmembrane</keyword>
<keyword id="KW-1133">Transmembrane helix</keyword>
<name>EGLN_DANRE</name>
<feature type="signal peptide" evidence="2">
    <location>
        <begin position="1"/>
        <end position="20"/>
    </location>
</feature>
<feature type="chain" id="PRO_5011117380" description="Endoglin">
    <location>
        <begin position="21"/>
        <end position="559"/>
    </location>
</feature>
<feature type="topological domain" description="Extracellular" evidence="7">
    <location>
        <begin position="21"/>
        <end position="473"/>
    </location>
</feature>
<feature type="transmembrane region" description="Helical" evidence="2">
    <location>
        <begin position="474"/>
        <end position="494"/>
    </location>
</feature>
<feature type="topological domain" description="Cytoplasmic" evidence="7">
    <location>
        <begin position="495"/>
        <end position="559"/>
    </location>
</feature>
<feature type="region of interest" description="Disordered" evidence="4">
    <location>
        <begin position="528"/>
        <end position="559"/>
    </location>
</feature>
<feature type="compositionally biased region" description="Low complexity" evidence="4">
    <location>
        <begin position="536"/>
        <end position="546"/>
    </location>
</feature>
<feature type="compositionally biased region" description="Polar residues" evidence="4">
    <location>
        <begin position="547"/>
        <end position="559"/>
    </location>
</feature>
<feature type="glycosylation site" description="N-linked (GlcNAc...) asparagine" evidence="3">
    <location>
        <position position="55"/>
    </location>
</feature>
<feature type="glycosylation site" description="N-linked (GlcNAc...) asparagine" evidence="3">
    <location>
        <position position="79"/>
    </location>
</feature>
<feature type="glycosylation site" description="N-linked (GlcNAc...) asparagine" evidence="3">
    <location>
        <position position="109"/>
    </location>
</feature>
<feature type="glycosylation site" description="N-linked (GlcNAc...) asparagine" evidence="3">
    <location>
        <position position="133"/>
    </location>
</feature>
<feature type="glycosylation site" description="N-linked (GlcNAc...) asparagine" evidence="3">
    <location>
        <position position="170"/>
    </location>
</feature>
<feature type="glycosylation site" description="N-linked (GlcNAc...) asparagine" evidence="3">
    <location>
        <position position="302"/>
    </location>
</feature>
<feature type="glycosylation site" description="N-linked (GlcNAc...) asparagine" evidence="3">
    <location>
        <position position="352"/>
    </location>
</feature>
<feature type="disulfide bond" evidence="1">
    <location>
        <begin position="25"/>
        <end position="201"/>
    </location>
</feature>
<feature type="disulfide bond" evidence="1">
    <location>
        <begin position="47"/>
        <end position="174"/>
    </location>
</feature>
<feature type="disulfide bond" evidence="1">
    <location>
        <begin position="381"/>
        <end position="427"/>
    </location>
</feature>
<feature type="disulfide bond" description="Interchain" evidence="1">
    <location>
        <position position="404"/>
    </location>
</feature>
<accession>A0A1Z2R986</accession>
<accession>A0A286NMM4</accession>
<accession>A0A286NMM5</accession>
<accession>A0A286NMM6</accession>
<dbReference type="EMBL" id="KY398837">
    <property type="protein sequence ID" value="ASA40290.1"/>
    <property type="molecule type" value="mRNA"/>
</dbReference>
<dbReference type="EMBL" id="MF788122">
    <property type="protein sequence ID" value="ASZ70605.1"/>
    <property type="molecule type" value="mRNA"/>
</dbReference>
<dbReference type="EMBL" id="MF788123">
    <property type="protein sequence ID" value="ASZ70606.1"/>
    <property type="molecule type" value="mRNA"/>
</dbReference>
<dbReference type="EMBL" id="MF788124">
    <property type="protein sequence ID" value="ASZ70607.1"/>
    <property type="molecule type" value="mRNA"/>
</dbReference>
<dbReference type="EMBL" id="BK010322">
    <property type="protein sequence ID" value="DAA80500.1"/>
    <property type="molecule type" value="mRNA"/>
</dbReference>
<dbReference type="RefSeq" id="XP_009300329.2">
    <property type="nucleotide sequence ID" value="XM_009302054.2"/>
</dbReference>
<dbReference type="RefSeq" id="XP_021332381.1">
    <property type="nucleotide sequence ID" value="XM_021476706.2"/>
</dbReference>
<dbReference type="SMR" id="A0A1Z2R986"/>
<dbReference type="FunCoup" id="A0A1Z2R986">
    <property type="interactions" value="35"/>
</dbReference>
<dbReference type="STRING" id="7955.ENSDARP00000144644"/>
<dbReference type="GlyCosmos" id="A0A1Z2R986">
    <property type="glycosylation" value="7 sites, No reported glycans"/>
</dbReference>
<dbReference type="GeneID" id="101883074"/>
<dbReference type="AGR" id="ZFIN:ZDB-GENE-170530-1"/>
<dbReference type="ZFIN" id="ZDB-GENE-170530-1">
    <property type="gene designation" value="eng"/>
</dbReference>
<dbReference type="InParanoid" id="A0A1Z2R986"/>
<dbReference type="OrthoDB" id="10072329at2759"/>
<dbReference type="PRO" id="PR:A0A1Z2R986"/>
<dbReference type="Proteomes" id="UP000000437">
    <property type="component" value="Chromosome 5"/>
</dbReference>
<dbReference type="GO" id="GO:0005886">
    <property type="term" value="C:plasma membrane"/>
    <property type="evidence" value="ECO:0007669"/>
    <property type="project" value="UniProtKB-SubCell"/>
</dbReference>
<dbReference type="GO" id="GO:0005539">
    <property type="term" value="F:glycosaminoglycan binding"/>
    <property type="evidence" value="ECO:0000318"/>
    <property type="project" value="GO_Central"/>
</dbReference>
<dbReference type="GO" id="GO:0005024">
    <property type="term" value="F:transforming growth factor beta receptor activity"/>
    <property type="evidence" value="ECO:0000318"/>
    <property type="project" value="GO_Central"/>
</dbReference>
<dbReference type="GO" id="GO:0005114">
    <property type="term" value="F:type II transforming growth factor beta receptor binding"/>
    <property type="evidence" value="ECO:0000318"/>
    <property type="project" value="GO_Central"/>
</dbReference>
<dbReference type="GO" id="GO:0001525">
    <property type="term" value="P:angiogenesis"/>
    <property type="evidence" value="ECO:0007669"/>
    <property type="project" value="UniProtKB-KW"/>
</dbReference>
<dbReference type="GO" id="GO:0001568">
    <property type="term" value="P:blood vessel development"/>
    <property type="evidence" value="ECO:0000315"/>
    <property type="project" value="ZFIN"/>
</dbReference>
<dbReference type="GO" id="GO:0048514">
    <property type="term" value="P:blood vessel morphogenesis"/>
    <property type="evidence" value="ECO:0000315"/>
    <property type="project" value="UniProtKB"/>
</dbReference>
<dbReference type="GO" id="GO:0016477">
    <property type="term" value="P:cell migration"/>
    <property type="evidence" value="ECO:0000318"/>
    <property type="project" value="GO_Central"/>
</dbReference>
<dbReference type="GO" id="GO:0071260">
    <property type="term" value="P:cellular response to mechanical stimulus"/>
    <property type="evidence" value="ECO:0000315"/>
    <property type="project" value="UniProtKB"/>
</dbReference>
<dbReference type="GO" id="GO:0001886">
    <property type="term" value="P:endothelial cell morphogenesis"/>
    <property type="evidence" value="ECO:0000315"/>
    <property type="project" value="UniProtKB"/>
</dbReference>
<dbReference type="GO" id="GO:0001837">
    <property type="term" value="P:epithelial to mesenchymal transition"/>
    <property type="evidence" value="ECO:0000318"/>
    <property type="project" value="GO_Central"/>
</dbReference>
<dbReference type="GO" id="GO:0007507">
    <property type="term" value="P:heart development"/>
    <property type="evidence" value="ECO:0000315"/>
    <property type="project" value="ZFIN"/>
</dbReference>
<dbReference type="GO" id="GO:0017015">
    <property type="term" value="P:regulation of transforming growth factor beta receptor signaling pathway"/>
    <property type="evidence" value="ECO:0000318"/>
    <property type="project" value="GO_Central"/>
</dbReference>
<dbReference type="GO" id="GO:0007179">
    <property type="term" value="P:transforming growth factor beta receptor signaling pathway"/>
    <property type="evidence" value="ECO:0000318"/>
    <property type="project" value="GO_Central"/>
</dbReference>
<dbReference type="Gene3D" id="2.60.40.4100">
    <property type="entry name" value="Zona pellucida, ZP-C domain"/>
    <property type="match status" value="1"/>
</dbReference>
<dbReference type="InterPro" id="IPR042235">
    <property type="entry name" value="ZP-C_dom"/>
</dbReference>
<dbReference type="PANTHER" id="PTHR14002:SF41">
    <property type="entry name" value="ENDOGLIN"/>
    <property type="match status" value="1"/>
</dbReference>
<dbReference type="PANTHER" id="PTHR14002">
    <property type="entry name" value="ENDOGLIN/TGF-BETA RECEPTOR TYPE III"/>
    <property type="match status" value="1"/>
</dbReference>
<evidence type="ECO:0000250" key="1">
    <source>
        <dbReference type="UniProtKB" id="P17813"/>
    </source>
</evidence>
<evidence type="ECO:0000255" key="2"/>
<evidence type="ECO:0000255" key="3">
    <source>
        <dbReference type="PROSITE-ProRule" id="PRU00498"/>
    </source>
</evidence>
<evidence type="ECO:0000256" key="4">
    <source>
        <dbReference type="SAM" id="MobiDB-lite"/>
    </source>
</evidence>
<evidence type="ECO:0000269" key="5">
    <source>
    </source>
</evidence>
<evidence type="ECO:0000303" key="6">
    <source>
    </source>
</evidence>
<evidence type="ECO:0000305" key="7"/>
<evidence type="ECO:0000312" key="8">
    <source>
        <dbReference type="EMBL" id="ASA40290.1"/>
    </source>
</evidence>
<evidence type="ECO:0000312" key="9">
    <source>
        <dbReference type="EMBL" id="DAA80500.1"/>
    </source>
</evidence>
<comment type="function">
    <text evidence="5">Vascular endothelium glycoprotein that plays an important role in the regulation of angiogenesis. Required for normal structure and integrity of adult vasculature. Important for endothelial cell shape changes in response to blood flow, which drive vascular remodeling and establishment of normal vascular morphology during angiogenesis.</text>
</comment>
<comment type="subunit">
    <text evidence="1">Homodimer; disulfide-linked.</text>
</comment>
<comment type="subcellular location">
    <subcellularLocation>
        <location evidence="1">Cell membrane</location>
        <topology evidence="2">Single-pass type I membrane protein</topology>
    </subcellularLocation>
</comment>
<comment type="developmental stage">
    <text evidence="5">Detected in vascular tissue at 36-72 hours post-fertilization, where it localizes to endothelial cells.</text>
</comment>
<comment type="disruption phenotype">
    <text evidence="5">Viable, with survival to adult stages. Brain tissue shows widespread vascular malformations with localized widening of blood vessels. During embryogenesis, blood vessel connectivity between the dorsal aorta (DA), intersegmental vessels (ISVs) and posterior cardinal vein (PCV) appears normal at 72 hours post-fertilization (hpf). However, blood flow through ISVs is significantly reduced. Blood vessel pruning is increased, probably due to aberrant hemodynamics. Arterial ISVs have a slightly increased diameter, while venous ISVs have greatly reduced diameter. The DA and PCV are both significantly dilated. Endothelial cells in the DA show increased surface area and abnormal morphology in response to blood flow. In contrast, wild-type vessels respond to increased blood flow by an initial expansion phase, followed by vessel contraction. klf2a-mediated shear stress sensing is not affected.</text>
</comment>
<comment type="caution">
    <text evidence="7">Has low similarity to mammalian endoglins and lacks the canonical ZP (zona pellucida) domain typically found in these proteins.</text>
</comment>
<protein>
    <recommendedName>
        <fullName evidence="6">Endoglin</fullName>
    </recommendedName>
</protein>
<reference evidence="8" key="1">
    <citation type="submission" date="2016-12" db="EMBL/GenBank/DDBJ databases">
        <title>Tempo-spatial expression of endoglin in zebrafish.</title>
        <authorList>
            <person name="Han R."/>
            <person name="Zhang D."/>
            <person name="Yang J."/>
        </authorList>
    </citation>
    <scope>NUCLEOTIDE SEQUENCE [MRNA]</scope>
</reference>
<reference evidence="9" key="2">
    <citation type="journal article" date="2017" name="Nat. Cell Biol.">
        <title>Endoglin controls blood vessel diameter through endothelial cell shape changes in response to haemodynamic cues.</title>
        <authorList>
            <person name="Sugden W.W."/>
            <person name="Meissner R."/>
            <person name="Aegerter-Wilmsen T."/>
            <person name="Tsaryk R."/>
            <person name="Leonard E.V."/>
            <person name="Bussmann J."/>
            <person name="Hamm M.J."/>
            <person name="Herzog W."/>
            <person name="Jin Y."/>
            <person name="Jakobsson L."/>
            <person name="Denz C."/>
            <person name="Siekmann A.F."/>
        </authorList>
    </citation>
    <scope>NUCLEOTIDE SEQUENCE [MRNA]</scope>
    <scope>FUNCTION</scope>
    <scope>DEVELOPMENTAL STAGE</scope>
    <scope>DISRUPTION PHENOTYPE</scope>
</reference>
<organism evidence="8">
    <name type="scientific">Danio rerio</name>
    <name type="common">Zebrafish</name>
    <name type="synonym">Brachydanio rerio</name>
    <dbReference type="NCBI Taxonomy" id="7955"/>
    <lineage>
        <taxon>Eukaryota</taxon>
        <taxon>Metazoa</taxon>
        <taxon>Chordata</taxon>
        <taxon>Craniata</taxon>
        <taxon>Vertebrata</taxon>
        <taxon>Euteleostomi</taxon>
        <taxon>Actinopterygii</taxon>
        <taxon>Neopterygii</taxon>
        <taxon>Teleostei</taxon>
        <taxon>Ostariophysi</taxon>
        <taxon>Cypriniformes</taxon>
        <taxon>Danionidae</taxon>
        <taxon>Danioninae</taxon>
        <taxon>Danio</taxon>
    </lineage>
</organism>
<sequence length="559" mass="61300">MKSICCVLVLCLLLCRRSTASESICELKDVSGNSNDWIVLREKPLGCWTDFQTENGTEVHIINLEDNPSVFTVNLLKANKSVVIFTSSSAQSSHAMLFDNPAVSIYVTNKTSLTFIHPTQKPLQILTAPPAGNVSAVLRWAAETFGGVTSVTNARNPKTITFTGVKGSQNSSRCELMPETPTEKPFIHLELNEPIEALKSCYMKHEGEKLHIINIPDGVTIRHVSVHLLSDCNVVLRGPAGTHWIIKNSLRIGILSNNQIHLQSFPLRPRMAISDNPTDIRQKALSYFSSGFISSYSEIRLNVTNVELWITDYSISSAPTEVEKTTPSPTSPPFPVQMQLFSSPDFTTPIDNNSRVLSDKRVYAEISSQTFREASIRVSSCWVRSTPVTREMPFREEPCFIKDCPKRLSFSFQILQDLPAGSWDLECAVKLCGVKRINNEESCTSETPVKRNVQVKPFTPTTNSCFEFGLSAVLGIAFGGFLIGVLLTGALWFIKIRTGHPVALGMRSTAAELSVLSISGCPCGLTKRQPVPTHPSPSENSSANASIGSTQSTPTSSMA</sequence>